<organism>
    <name type="scientific">Shigella sonnei (strain Ss046)</name>
    <dbReference type="NCBI Taxonomy" id="300269"/>
    <lineage>
        <taxon>Bacteria</taxon>
        <taxon>Pseudomonadati</taxon>
        <taxon>Pseudomonadota</taxon>
        <taxon>Gammaproteobacteria</taxon>
        <taxon>Enterobacterales</taxon>
        <taxon>Enterobacteriaceae</taxon>
        <taxon>Shigella</taxon>
    </lineage>
</organism>
<comment type="subcellular location">
    <subcellularLocation>
        <location evidence="1">Cell membrane</location>
        <topology evidence="1">Multi-pass membrane protein</topology>
    </subcellularLocation>
</comment>
<comment type="similarity">
    <text evidence="1">Belongs to the AAE transporter (TC 2.A.81) family. YbjL subfamily.</text>
</comment>
<evidence type="ECO:0000255" key="1">
    <source>
        <dbReference type="HAMAP-Rule" id="MF_01015"/>
    </source>
</evidence>
<name>YBJL_SHISS</name>
<keyword id="KW-1003">Cell membrane</keyword>
<keyword id="KW-0472">Membrane</keyword>
<keyword id="KW-1185">Reference proteome</keyword>
<keyword id="KW-0677">Repeat</keyword>
<keyword id="KW-0812">Transmembrane</keyword>
<keyword id="KW-1133">Transmembrane helix</keyword>
<keyword id="KW-0813">Transport</keyword>
<sequence>MNINVAELLNGNYILLLFVVLTLGLCLGKLRLGSIQLGNSIGVLVVSLLLGQQHFSINTDALNLGFMLFIFCVGVEAGPNFFSIFFRDGKNYLMLALVMVGSALVIALGLGKLFGWDIGLTAGMLAGSMTSTPVLVGAGDTLRHSGMESRQLSLALDNLSLGYALTYLIGLVSLIVGARYLPKLQHQDLQTSAQQIARERGLDTDANRKVYLPVIRAYRVGPELVAWTDGKNLRELGIYRQTGCYIERIRRNGILANPDGDAVLQMGDEIALVGYPDAHARLDPSFRNGKEVFDRDLLDMRIVTEEVVVKNHNAVGKRLAQLKLTDHGCFLNRVIRSQIEMPIDDNVVLNKGDVLQVSGDARRVKTIADRIGFISIHSQVTDLLAFCAFFVIGLMIGMITFQFSTFSFGMGNAAGLLFAGIMLGFMRANHPTFGYIPQGALSMVKEFGLMVFMAGVGLSAGSGINNGLGAIGGQMLIAGLIVSLVPVVICFLFGAYVLRMNRALLFGAMMGARTCAPAMEIISDTARSNIPALGYAGTYAIANVLLTLAGTIIVMVWPGLG</sequence>
<dbReference type="EMBL" id="CP000038">
    <property type="protein sequence ID" value="AAZ87575.1"/>
    <property type="molecule type" value="Genomic_DNA"/>
</dbReference>
<dbReference type="RefSeq" id="WP_001024888.1">
    <property type="nucleotide sequence ID" value="NC_007384.1"/>
</dbReference>
<dbReference type="SMR" id="Q3Z3T7"/>
<dbReference type="KEGG" id="ssn:SSON_0832"/>
<dbReference type="HOGENOM" id="CLU_035023_2_2_6"/>
<dbReference type="Proteomes" id="UP000002529">
    <property type="component" value="Chromosome"/>
</dbReference>
<dbReference type="GO" id="GO:0005886">
    <property type="term" value="C:plasma membrane"/>
    <property type="evidence" value="ECO:0007669"/>
    <property type="project" value="UniProtKB-SubCell"/>
</dbReference>
<dbReference type="GO" id="GO:0008324">
    <property type="term" value="F:monoatomic cation transmembrane transporter activity"/>
    <property type="evidence" value="ECO:0007669"/>
    <property type="project" value="InterPro"/>
</dbReference>
<dbReference type="GO" id="GO:0006813">
    <property type="term" value="P:potassium ion transport"/>
    <property type="evidence" value="ECO:0007669"/>
    <property type="project" value="InterPro"/>
</dbReference>
<dbReference type="FunFam" id="3.30.70.1450:FF:000003">
    <property type="entry name" value="Putative transport protein YbjL"/>
    <property type="match status" value="1"/>
</dbReference>
<dbReference type="Gene3D" id="3.30.70.1450">
    <property type="entry name" value="Regulator of K+ conductance, C-terminal domain"/>
    <property type="match status" value="2"/>
</dbReference>
<dbReference type="HAMAP" id="MF_01015">
    <property type="entry name" value="YbjL"/>
    <property type="match status" value="1"/>
</dbReference>
<dbReference type="InterPro" id="IPR050144">
    <property type="entry name" value="AAE_transporter"/>
</dbReference>
<dbReference type="InterPro" id="IPR006037">
    <property type="entry name" value="RCK_C"/>
</dbReference>
<dbReference type="InterPro" id="IPR036721">
    <property type="entry name" value="RCK_C_sf"/>
</dbReference>
<dbReference type="InterPro" id="IPR023017">
    <property type="entry name" value="Transp_YbjL_put"/>
</dbReference>
<dbReference type="InterPro" id="IPR006512">
    <property type="entry name" value="YidE_YbjL"/>
</dbReference>
<dbReference type="NCBIfam" id="NF003440">
    <property type="entry name" value="PRK04972.1"/>
    <property type="match status" value="1"/>
</dbReference>
<dbReference type="NCBIfam" id="TIGR01625">
    <property type="entry name" value="YidE_YbjL_dupl"/>
    <property type="match status" value="2"/>
</dbReference>
<dbReference type="PANTHER" id="PTHR30445">
    <property type="entry name" value="K(+)_H(+) ANTIPORTER SUBUNIT KHTT"/>
    <property type="match status" value="1"/>
</dbReference>
<dbReference type="PANTHER" id="PTHR30445:SF10">
    <property type="entry name" value="TRANSPORT PROTEIN YBJL-RELATED"/>
    <property type="match status" value="1"/>
</dbReference>
<dbReference type="Pfam" id="PF06826">
    <property type="entry name" value="Asp-Al_Ex"/>
    <property type="match status" value="2"/>
</dbReference>
<dbReference type="Pfam" id="PF02080">
    <property type="entry name" value="TrkA_C"/>
    <property type="match status" value="2"/>
</dbReference>
<dbReference type="SUPFAM" id="SSF116726">
    <property type="entry name" value="TrkA C-terminal domain-like"/>
    <property type="match status" value="2"/>
</dbReference>
<dbReference type="PROSITE" id="PS51202">
    <property type="entry name" value="RCK_C"/>
    <property type="match status" value="2"/>
</dbReference>
<protein>
    <recommendedName>
        <fullName evidence="1">Putative transport protein YbjL</fullName>
    </recommendedName>
</protein>
<proteinExistence type="inferred from homology"/>
<accession>Q3Z3T7</accession>
<reference key="1">
    <citation type="journal article" date="2005" name="Nucleic Acids Res.">
        <title>Genome dynamics and diversity of Shigella species, the etiologic agents of bacillary dysentery.</title>
        <authorList>
            <person name="Yang F."/>
            <person name="Yang J."/>
            <person name="Zhang X."/>
            <person name="Chen L."/>
            <person name="Jiang Y."/>
            <person name="Yan Y."/>
            <person name="Tang X."/>
            <person name="Wang J."/>
            <person name="Xiong Z."/>
            <person name="Dong J."/>
            <person name="Xue Y."/>
            <person name="Zhu Y."/>
            <person name="Xu X."/>
            <person name="Sun L."/>
            <person name="Chen S."/>
            <person name="Nie H."/>
            <person name="Peng J."/>
            <person name="Xu J."/>
            <person name="Wang Y."/>
            <person name="Yuan Z."/>
            <person name="Wen Y."/>
            <person name="Yao Z."/>
            <person name="Shen Y."/>
            <person name="Qiang B."/>
            <person name="Hou Y."/>
            <person name="Yu J."/>
            <person name="Jin Q."/>
        </authorList>
    </citation>
    <scope>NUCLEOTIDE SEQUENCE [LARGE SCALE GENOMIC DNA]</scope>
    <source>
        <strain>Ss046</strain>
    </source>
</reference>
<gene>
    <name evidence="1" type="primary">ybjL</name>
    <name type="ordered locus">SSON_0832</name>
</gene>
<feature type="chain" id="PRO_0000226889" description="Putative transport protein YbjL">
    <location>
        <begin position="1"/>
        <end position="561"/>
    </location>
</feature>
<feature type="transmembrane region" description="Helical" evidence="1">
    <location>
        <begin position="8"/>
        <end position="28"/>
    </location>
</feature>
<feature type="transmembrane region" description="Helical" evidence="1">
    <location>
        <begin position="32"/>
        <end position="52"/>
    </location>
</feature>
<feature type="transmembrane region" description="Helical" evidence="1">
    <location>
        <begin position="66"/>
        <end position="86"/>
    </location>
</feature>
<feature type="transmembrane region" description="Helical" evidence="1">
    <location>
        <begin position="94"/>
        <end position="114"/>
    </location>
</feature>
<feature type="transmembrane region" description="Helical" evidence="1">
    <location>
        <begin position="158"/>
        <end position="178"/>
    </location>
</feature>
<feature type="transmembrane region" description="Helical" evidence="1">
    <location>
        <begin position="383"/>
        <end position="403"/>
    </location>
</feature>
<feature type="transmembrane region" description="Helical" evidence="1">
    <location>
        <begin position="406"/>
        <end position="426"/>
    </location>
</feature>
<feature type="transmembrane region" description="Helical" evidence="1">
    <location>
        <begin position="451"/>
        <end position="471"/>
    </location>
</feature>
<feature type="transmembrane region" description="Helical" evidence="1">
    <location>
        <begin position="475"/>
        <end position="495"/>
    </location>
</feature>
<feature type="transmembrane region" description="Helical" evidence="1">
    <location>
        <begin position="540"/>
        <end position="560"/>
    </location>
</feature>
<feature type="domain" description="RCK C-terminal 1" evidence="1">
    <location>
        <begin position="200"/>
        <end position="288"/>
    </location>
</feature>
<feature type="domain" description="RCK C-terminal 2" evidence="1">
    <location>
        <begin position="292"/>
        <end position="373"/>
    </location>
</feature>